<keyword id="KW-1064">Adaptive immunity</keyword>
<keyword id="KW-1003">Cell membrane</keyword>
<keyword id="KW-1015">Disulfide bond</keyword>
<keyword id="KW-0325">Glycoprotein</keyword>
<keyword id="KW-0391">Immunity</keyword>
<keyword id="KW-0399">Innate immunity</keyword>
<keyword id="KW-0430">Lectin</keyword>
<keyword id="KW-0472">Membrane</keyword>
<keyword id="KW-0675">Receptor</keyword>
<keyword id="KW-1185">Reference proteome</keyword>
<keyword id="KW-0735">Signal-anchor</keyword>
<keyword id="KW-0812">Transmembrane</keyword>
<keyword id="KW-1133">Transmembrane helix</keyword>
<comment type="function">
    <text evidence="1">Immune receptor involved in self-nonself discrimination. In complex with KLRC1 or KLRC2 on cytotoxic and regulatory lymphocyte subsets, recognizes non-classical major histocompatibility (MHC) class Ib molecule MHC-E loaded with self-peptides derived from the signal sequence of classical MHC class Ia and non-classical MHC class Ib molecules. Enables cytotoxic cells to monitor the expression of MHC class I molecules in healthy cells and to tolerate self. Primarily functions as a ligand binding subunit as it lacks the capacity to signal.</text>
</comment>
<comment type="function">
    <text evidence="1">KLRD1-KLRC1 acts as an immune inhibitory receptor. Key inhibitory receptor on natural killer (NK) cells that regulates their activation and effector functions. Dominantly counteracts T cell receptor signaling on a subset of memory/effector CD8-positive T cells as part of an antigen-driven response to avoid autoimmunity. On intraepithelial CD8-positive gamma-delta regulatory T cells triggers TGFB1 secretion, which in turn limits the cytotoxic programming of intraepithelial CD8-positive alpha-beta T cells, distinguishing harmless from pathogenic antigens. In MHC-E-rich tumor microenvironment, acts as an immune inhibitory checkpoint and may contribute to progressive loss of effector functions of NK cells and tumor-specific T cells, a state known as cell exhaustion. Upon MHC-E-peptide binding, transmits intracellular signals through KLRC1 immunoreceptor tyrosine-based inhibition motifs (ITIMs) by recruiting INPP5D/SHIP-1 and INPPL1/SHIP-2 tyrosine phosphatases to ITIMs, and ultimately opposing signals transmitted by activating receptors through dephosphorylation of proximal signaling molecules.</text>
</comment>
<comment type="function">
    <text evidence="1">KLRD1-KLRC2 acts as an immune activating receptor. On cytotoxic lymphocyte subsets recognizes MHC-E loaded with signal sequence-derived peptides from non-classical MHC class Ib MHC-G molecules, likely playing a role in the generation and effector functions of adaptive NK cells and in maternal-fetal tolerance during pregnancy. Regulates the effector functions of terminally differentiated cytotoxic lymphocyte subsets, and in particular may play a role in adaptive NK cell response to viral infection. Upon MHC-E-peptide binding, transmits intracellular signals via the adapter protein TYROBP/DAP12, triggering the phosphorylation of proximal signaling molecules and cell activation.</text>
</comment>
<comment type="subunit">
    <text evidence="1">Can form disulfide-bonded heterodimer with NKG2 family members KLRC1 and KLRC2. KLRD1-KLRC1 heterodimer interacts with peptide-bound MHC-E-B2M heterotrimeric complex. KLRD1 plays a prominent role in directly interacting with MHC-E. KLRD1-KLRC1 interacts with much higher affinity with peptide-bound MHC-E-B2M than KLRD1-KLRC2. Interacts with the adapter protein TYROBP/DAP12; this interaction is required for cell surface expression and cell activation.</text>
</comment>
<comment type="subcellular location">
    <subcellularLocation>
        <location evidence="1">Cell membrane</location>
        <topology evidence="2">Single-pass type II membrane protein</topology>
    </subcellularLocation>
</comment>
<accession>Q38HS3</accession>
<name>KLRD1_CANLF</name>
<dbReference type="EMBL" id="DQ228356">
    <property type="protein sequence ID" value="ABB16421.1"/>
    <property type="molecule type" value="mRNA"/>
</dbReference>
<dbReference type="RefSeq" id="NP_001041500.1">
    <property type="nucleotide sequence ID" value="NM_001048035.1"/>
</dbReference>
<dbReference type="RefSeq" id="XP_005636778.1">
    <property type="nucleotide sequence ID" value="XM_005636721.1"/>
</dbReference>
<dbReference type="SMR" id="Q38HS3"/>
<dbReference type="FunCoup" id="Q38HS3">
    <property type="interactions" value="62"/>
</dbReference>
<dbReference type="STRING" id="9615.ENSCAFP00000035934"/>
<dbReference type="GlyCosmos" id="Q38HS3">
    <property type="glycosylation" value="2 sites, No reported glycans"/>
</dbReference>
<dbReference type="PaxDb" id="9612-ENSCAFP00000035934"/>
<dbReference type="Ensembl" id="ENSCAFT00000043457.4">
    <property type="protein sequence ID" value="ENSCAFP00000035934.1"/>
    <property type="gene ID" value="ENSCAFG00000013459.6"/>
</dbReference>
<dbReference type="Ensembl" id="ENSCAFT00030035673.1">
    <property type="protein sequence ID" value="ENSCAFP00030031110.1"/>
    <property type="gene ID" value="ENSCAFG00030019329.1"/>
</dbReference>
<dbReference type="GeneID" id="611360"/>
<dbReference type="KEGG" id="cfa:611360"/>
<dbReference type="CTD" id="3824"/>
<dbReference type="VGNC" id="VGNC:42486">
    <property type="gene designation" value="KLRD1"/>
</dbReference>
<dbReference type="eggNOG" id="KOG4297">
    <property type="taxonomic scope" value="Eukaryota"/>
</dbReference>
<dbReference type="InParanoid" id="Q38HS3"/>
<dbReference type="OMA" id="RFICERK"/>
<dbReference type="OrthoDB" id="8950604at2759"/>
<dbReference type="TreeFam" id="TF336674"/>
<dbReference type="Reactome" id="R-CFA-2172127">
    <property type="pathway name" value="DAP12 interactions"/>
</dbReference>
<dbReference type="Reactome" id="R-CFA-2424491">
    <property type="pathway name" value="DAP12 signaling"/>
</dbReference>
<dbReference type="Proteomes" id="UP000002254">
    <property type="component" value="Chromosome 27"/>
</dbReference>
<dbReference type="Proteomes" id="UP000694429">
    <property type="component" value="Chromosome 27"/>
</dbReference>
<dbReference type="Proteomes" id="UP000694542">
    <property type="component" value="Unplaced"/>
</dbReference>
<dbReference type="Proteomes" id="UP000805418">
    <property type="component" value="Unplaced"/>
</dbReference>
<dbReference type="Bgee" id="ENSCAFG00000013459">
    <property type="expression patterns" value="Expressed in spleen and 39 other cell types or tissues"/>
</dbReference>
<dbReference type="GO" id="GO:0009897">
    <property type="term" value="C:external side of plasma membrane"/>
    <property type="evidence" value="ECO:0000318"/>
    <property type="project" value="GO_Central"/>
</dbReference>
<dbReference type="GO" id="GO:0005886">
    <property type="term" value="C:plasma membrane"/>
    <property type="evidence" value="ECO:0000250"/>
    <property type="project" value="UniProtKB"/>
</dbReference>
<dbReference type="GO" id="GO:0030246">
    <property type="term" value="F:carbohydrate binding"/>
    <property type="evidence" value="ECO:0007669"/>
    <property type="project" value="UniProtKB-KW"/>
</dbReference>
<dbReference type="GO" id="GO:0004888">
    <property type="term" value="F:transmembrane signaling receptor activity"/>
    <property type="evidence" value="ECO:0000318"/>
    <property type="project" value="GO_Central"/>
</dbReference>
<dbReference type="GO" id="GO:0002250">
    <property type="term" value="P:adaptive immune response"/>
    <property type="evidence" value="ECO:0007669"/>
    <property type="project" value="UniProtKB-KW"/>
</dbReference>
<dbReference type="GO" id="GO:0045087">
    <property type="term" value="P:innate immune response"/>
    <property type="evidence" value="ECO:0007669"/>
    <property type="project" value="UniProtKB-KW"/>
</dbReference>
<dbReference type="GO" id="GO:0045953">
    <property type="term" value="P:negative regulation of natural killer cell mediated cytotoxicity"/>
    <property type="evidence" value="ECO:0000250"/>
    <property type="project" value="UniProtKB"/>
</dbReference>
<dbReference type="GO" id="GO:0001915">
    <property type="term" value="P:negative regulation of T cell mediated cytotoxicity"/>
    <property type="evidence" value="ECO:0000250"/>
    <property type="project" value="UniProtKB"/>
</dbReference>
<dbReference type="GO" id="GO:0045954">
    <property type="term" value="P:positive regulation of natural killer cell mediated cytotoxicity"/>
    <property type="evidence" value="ECO:0000318"/>
    <property type="project" value="GO_Central"/>
</dbReference>
<dbReference type="GO" id="GO:0002223">
    <property type="term" value="P:stimulatory C-type lectin receptor signaling pathway"/>
    <property type="evidence" value="ECO:0000250"/>
    <property type="project" value="UniProtKB"/>
</dbReference>
<dbReference type="CDD" id="cd03593">
    <property type="entry name" value="CLECT_NK_receptors_like"/>
    <property type="match status" value="1"/>
</dbReference>
<dbReference type="Gene3D" id="3.10.100.10">
    <property type="entry name" value="Mannose-Binding Protein A, subunit A"/>
    <property type="match status" value="1"/>
</dbReference>
<dbReference type="InterPro" id="IPR001304">
    <property type="entry name" value="C-type_lectin-like"/>
</dbReference>
<dbReference type="InterPro" id="IPR016186">
    <property type="entry name" value="C-type_lectin-like/link_sf"/>
</dbReference>
<dbReference type="InterPro" id="IPR016187">
    <property type="entry name" value="CTDL_fold"/>
</dbReference>
<dbReference type="InterPro" id="IPR050919">
    <property type="entry name" value="NKG2/CD94_NK_receptors"/>
</dbReference>
<dbReference type="InterPro" id="IPR033992">
    <property type="entry name" value="NKR-like_CTLD"/>
</dbReference>
<dbReference type="PANTHER" id="PTHR22800">
    <property type="entry name" value="C-TYPE LECTIN PROTEINS"/>
    <property type="match status" value="1"/>
</dbReference>
<dbReference type="PANTHER" id="PTHR22800:SF252">
    <property type="entry name" value="NATURAL KILLER CELLS ANTIGEN CD94"/>
    <property type="match status" value="1"/>
</dbReference>
<dbReference type="Pfam" id="PF00059">
    <property type="entry name" value="Lectin_C"/>
    <property type="match status" value="1"/>
</dbReference>
<dbReference type="SMART" id="SM00034">
    <property type="entry name" value="CLECT"/>
    <property type="match status" value="1"/>
</dbReference>
<dbReference type="SUPFAM" id="SSF56436">
    <property type="entry name" value="C-type lectin-like"/>
    <property type="match status" value="1"/>
</dbReference>
<dbReference type="PROSITE" id="PS50041">
    <property type="entry name" value="C_TYPE_LECTIN_2"/>
    <property type="match status" value="1"/>
</dbReference>
<evidence type="ECO:0000250" key="1">
    <source>
        <dbReference type="UniProtKB" id="Q13241"/>
    </source>
</evidence>
<evidence type="ECO:0000255" key="2"/>
<evidence type="ECO:0000255" key="3">
    <source>
        <dbReference type="PROSITE-ProRule" id="PRU00040"/>
    </source>
</evidence>
<gene>
    <name type="primary">KLRD1</name>
    <name type="synonym">CD94</name>
</gene>
<sequence length="179" mass="20473">MAVSQTTLWNLISGILGVICLLLMTTMGILLKNLLLTESIQPTLSPGPITELQKGSDCCSCPKRWIGHQCNCYLFFDELKSWTESRDFCASQNSSLLHIQNRDELRFVSSSKYFYWIGVYYSKENGTWLWENGLALPQDLLQTIQTFDTKKCVIYSSSHSVLDVSCEDKSRFICKQELM</sequence>
<organism>
    <name type="scientific">Canis lupus familiaris</name>
    <name type="common">Dog</name>
    <name type="synonym">Canis familiaris</name>
    <dbReference type="NCBI Taxonomy" id="9615"/>
    <lineage>
        <taxon>Eukaryota</taxon>
        <taxon>Metazoa</taxon>
        <taxon>Chordata</taxon>
        <taxon>Craniata</taxon>
        <taxon>Vertebrata</taxon>
        <taxon>Euteleostomi</taxon>
        <taxon>Mammalia</taxon>
        <taxon>Eutheria</taxon>
        <taxon>Laurasiatheria</taxon>
        <taxon>Carnivora</taxon>
        <taxon>Caniformia</taxon>
        <taxon>Canidae</taxon>
        <taxon>Canis</taxon>
    </lineage>
</organism>
<protein>
    <recommendedName>
        <fullName>Natural killer cells antigen CD94</fullName>
    </recommendedName>
    <alternativeName>
        <fullName>Killer cell lectin-like receptor subfamily D member 1</fullName>
    </alternativeName>
    <cdAntigenName>CD94</cdAntigenName>
</protein>
<feature type="chain" id="PRO_0000378457" description="Natural killer cells antigen CD94">
    <location>
        <begin position="1"/>
        <end position="179"/>
    </location>
</feature>
<feature type="topological domain" description="Cytoplasmic" evidence="2">
    <location>
        <begin position="1"/>
        <end position="10"/>
    </location>
</feature>
<feature type="transmembrane region" description="Helical; Signal-anchor for type II membrane protein" evidence="2">
    <location>
        <begin position="11"/>
        <end position="31"/>
    </location>
</feature>
<feature type="topological domain" description="Extracellular" evidence="2">
    <location>
        <begin position="32"/>
        <end position="179"/>
    </location>
</feature>
<feature type="domain" description="C-type lectin" evidence="3">
    <location>
        <begin position="68"/>
        <end position="175"/>
    </location>
</feature>
<feature type="glycosylation site" description="N-linked (GlcNAc...) asparagine" evidence="2">
    <location>
        <position position="93"/>
    </location>
</feature>
<feature type="glycosylation site" description="N-linked (GlcNAc...) asparagine" evidence="2">
    <location>
        <position position="125"/>
    </location>
</feature>
<feature type="disulfide bond" evidence="3">
    <location>
        <begin position="58"/>
        <end position="70"/>
    </location>
</feature>
<feature type="disulfide bond" description="Interchain (with C-116 in KLRC1/NGK2A)" evidence="3">
    <location>
        <position position="59"/>
    </location>
</feature>
<feature type="disulfide bond" evidence="3">
    <location>
        <begin position="61"/>
        <end position="72"/>
    </location>
</feature>
<feature type="disulfide bond" evidence="3">
    <location>
        <begin position="89"/>
        <end position="174"/>
    </location>
</feature>
<feature type="disulfide bond" evidence="3">
    <location>
        <begin position="152"/>
        <end position="166"/>
    </location>
</feature>
<reference key="1">
    <citation type="submission" date="2005-09" db="EMBL/GenBank/DDBJ databases">
        <title>Canis familiaris CD94 cDNA.</title>
        <authorList>
            <person name="Jochum C."/>
            <person name="Venkataraman G.M."/>
            <person name="Beste M."/>
            <person name="Graves S.S."/>
            <person name="Storb R."/>
        </authorList>
    </citation>
    <scope>NUCLEOTIDE SEQUENCE [MRNA]</scope>
</reference>
<proteinExistence type="evidence at transcript level"/>